<keyword id="KW-0665">Pyrimidine biosynthesis</keyword>
<keyword id="KW-0808">Transferase</keyword>
<feature type="chain" id="PRO_0000301562" description="Aspartate carbamoyltransferase catalytic subunit">
    <location>
        <begin position="1"/>
        <end position="311"/>
    </location>
</feature>
<feature type="binding site" evidence="1">
    <location>
        <position position="55"/>
    </location>
    <ligand>
        <name>carbamoyl phosphate</name>
        <dbReference type="ChEBI" id="CHEBI:58228"/>
    </ligand>
</feature>
<feature type="binding site" evidence="1">
    <location>
        <position position="56"/>
    </location>
    <ligand>
        <name>carbamoyl phosphate</name>
        <dbReference type="ChEBI" id="CHEBI:58228"/>
    </ligand>
</feature>
<feature type="binding site" evidence="1">
    <location>
        <position position="83"/>
    </location>
    <ligand>
        <name>L-aspartate</name>
        <dbReference type="ChEBI" id="CHEBI:29991"/>
    </ligand>
</feature>
<feature type="binding site" evidence="1">
    <location>
        <position position="105"/>
    </location>
    <ligand>
        <name>carbamoyl phosphate</name>
        <dbReference type="ChEBI" id="CHEBI:58228"/>
    </ligand>
</feature>
<feature type="binding site" evidence="1">
    <location>
        <position position="133"/>
    </location>
    <ligand>
        <name>carbamoyl phosphate</name>
        <dbReference type="ChEBI" id="CHEBI:58228"/>
    </ligand>
</feature>
<feature type="binding site" evidence="1">
    <location>
        <position position="136"/>
    </location>
    <ligand>
        <name>carbamoyl phosphate</name>
        <dbReference type="ChEBI" id="CHEBI:58228"/>
    </ligand>
</feature>
<feature type="binding site" evidence="1">
    <location>
        <position position="166"/>
    </location>
    <ligand>
        <name>L-aspartate</name>
        <dbReference type="ChEBI" id="CHEBI:29991"/>
    </ligand>
</feature>
<feature type="binding site" evidence="1">
    <location>
        <position position="220"/>
    </location>
    <ligand>
        <name>L-aspartate</name>
        <dbReference type="ChEBI" id="CHEBI:29991"/>
    </ligand>
</feature>
<feature type="binding site" evidence="1">
    <location>
        <position position="261"/>
    </location>
    <ligand>
        <name>carbamoyl phosphate</name>
        <dbReference type="ChEBI" id="CHEBI:58228"/>
    </ligand>
</feature>
<feature type="binding site" evidence="1">
    <location>
        <position position="262"/>
    </location>
    <ligand>
        <name>carbamoyl phosphate</name>
        <dbReference type="ChEBI" id="CHEBI:58228"/>
    </ligand>
</feature>
<protein>
    <recommendedName>
        <fullName evidence="1">Aspartate carbamoyltransferase catalytic subunit</fullName>
        <ecNumber evidence="1">2.1.3.2</ecNumber>
    </recommendedName>
    <alternativeName>
        <fullName evidence="1">Aspartate transcarbamylase</fullName>
        <shortName evidence="1">ATCase</shortName>
    </alternativeName>
</protein>
<comment type="function">
    <text evidence="1">Catalyzes the condensation of carbamoyl phosphate and aspartate to form carbamoyl aspartate and inorganic phosphate, the committed step in the de novo pyrimidine nucleotide biosynthesis pathway.</text>
</comment>
<comment type="catalytic activity">
    <reaction evidence="1">
        <text>carbamoyl phosphate + L-aspartate = N-carbamoyl-L-aspartate + phosphate + H(+)</text>
        <dbReference type="Rhea" id="RHEA:20013"/>
        <dbReference type="ChEBI" id="CHEBI:15378"/>
        <dbReference type="ChEBI" id="CHEBI:29991"/>
        <dbReference type="ChEBI" id="CHEBI:32814"/>
        <dbReference type="ChEBI" id="CHEBI:43474"/>
        <dbReference type="ChEBI" id="CHEBI:58228"/>
        <dbReference type="EC" id="2.1.3.2"/>
    </reaction>
</comment>
<comment type="pathway">
    <text evidence="1">Pyrimidine metabolism; UMP biosynthesis via de novo pathway; (S)-dihydroorotate from bicarbonate: step 2/3.</text>
</comment>
<comment type="subunit">
    <text evidence="1">Heterododecamer (2C3:3R2) of six catalytic PyrB chains organized as two trimers (C3), and six regulatory PyrI chains organized as three dimers (R2).</text>
</comment>
<comment type="similarity">
    <text evidence="1">Belongs to the aspartate/ornithine carbamoyltransferase superfamily. ATCase family.</text>
</comment>
<organism>
    <name type="scientific">Chlorobium chlorochromatii (strain CaD3)</name>
    <dbReference type="NCBI Taxonomy" id="340177"/>
    <lineage>
        <taxon>Bacteria</taxon>
        <taxon>Pseudomonadati</taxon>
        <taxon>Chlorobiota</taxon>
        <taxon>Chlorobiia</taxon>
        <taxon>Chlorobiales</taxon>
        <taxon>Chlorobiaceae</taxon>
        <taxon>Chlorobium/Pelodictyon group</taxon>
        <taxon>Chlorobium</taxon>
    </lineage>
</organism>
<reference key="1">
    <citation type="submission" date="2005-08" db="EMBL/GenBank/DDBJ databases">
        <title>Complete sequence of Chlorobium chlorochromatii CaD3.</title>
        <authorList>
            <consortium name="US DOE Joint Genome Institute"/>
            <person name="Copeland A."/>
            <person name="Lucas S."/>
            <person name="Lapidus A."/>
            <person name="Barry K."/>
            <person name="Detter J.C."/>
            <person name="Glavina T."/>
            <person name="Hammon N."/>
            <person name="Israni S."/>
            <person name="Pitluck S."/>
            <person name="Bryant D."/>
            <person name="Schmutz J."/>
            <person name="Larimer F."/>
            <person name="Land M."/>
            <person name="Kyrpides N."/>
            <person name="Ivanova N."/>
            <person name="Richardson P."/>
        </authorList>
    </citation>
    <scope>NUCLEOTIDE SEQUENCE [LARGE SCALE GENOMIC DNA]</scope>
    <source>
        <strain>CaD3</strain>
    </source>
</reference>
<proteinExistence type="inferred from homology"/>
<evidence type="ECO:0000255" key="1">
    <source>
        <dbReference type="HAMAP-Rule" id="MF_00001"/>
    </source>
</evidence>
<dbReference type="EC" id="2.1.3.2" evidence="1"/>
<dbReference type="EMBL" id="CP000108">
    <property type="protein sequence ID" value="ABB28594.1"/>
    <property type="molecule type" value="Genomic_DNA"/>
</dbReference>
<dbReference type="SMR" id="Q3AQY1"/>
<dbReference type="STRING" id="340177.Cag_1334"/>
<dbReference type="KEGG" id="cch:Cag_1334"/>
<dbReference type="eggNOG" id="COG0540">
    <property type="taxonomic scope" value="Bacteria"/>
</dbReference>
<dbReference type="HOGENOM" id="CLU_043846_2_0_10"/>
<dbReference type="OrthoDB" id="9774690at2"/>
<dbReference type="UniPathway" id="UPA00070">
    <property type="reaction ID" value="UER00116"/>
</dbReference>
<dbReference type="GO" id="GO:0005829">
    <property type="term" value="C:cytosol"/>
    <property type="evidence" value="ECO:0007669"/>
    <property type="project" value="TreeGrafter"/>
</dbReference>
<dbReference type="GO" id="GO:0016597">
    <property type="term" value="F:amino acid binding"/>
    <property type="evidence" value="ECO:0007669"/>
    <property type="project" value="InterPro"/>
</dbReference>
<dbReference type="GO" id="GO:0004070">
    <property type="term" value="F:aspartate carbamoyltransferase activity"/>
    <property type="evidence" value="ECO:0007669"/>
    <property type="project" value="UniProtKB-UniRule"/>
</dbReference>
<dbReference type="GO" id="GO:0006207">
    <property type="term" value="P:'de novo' pyrimidine nucleobase biosynthetic process"/>
    <property type="evidence" value="ECO:0007669"/>
    <property type="project" value="InterPro"/>
</dbReference>
<dbReference type="GO" id="GO:0044205">
    <property type="term" value="P:'de novo' UMP biosynthetic process"/>
    <property type="evidence" value="ECO:0007669"/>
    <property type="project" value="UniProtKB-UniRule"/>
</dbReference>
<dbReference type="GO" id="GO:0006520">
    <property type="term" value="P:amino acid metabolic process"/>
    <property type="evidence" value="ECO:0007669"/>
    <property type="project" value="InterPro"/>
</dbReference>
<dbReference type="Gene3D" id="3.40.50.1370">
    <property type="entry name" value="Aspartate/ornithine carbamoyltransferase"/>
    <property type="match status" value="2"/>
</dbReference>
<dbReference type="HAMAP" id="MF_00001">
    <property type="entry name" value="Asp_carb_tr"/>
    <property type="match status" value="1"/>
</dbReference>
<dbReference type="InterPro" id="IPR006132">
    <property type="entry name" value="Asp/Orn_carbamoyltranf_P-bd"/>
</dbReference>
<dbReference type="InterPro" id="IPR006130">
    <property type="entry name" value="Asp/Orn_carbamoylTrfase"/>
</dbReference>
<dbReference type="InterPro" id="IPR036901">
    <property type="entry name" value="Asp/Orn_carbamoylTrfase_sf"/>
</dbReference>
<dbReference type="InterPro" id="IPR002082">
    <property type="entry name" value="Asp_carbamoyltransf"/>
</dbReference>
<dbReference type="InterPro" id="IPR006131">
    <property type="entry name" value="Asp_carbamoyltransf_Asp/Orn-bd"/>
</dbReference>
<dbReference type="NCBIfam" id="TIGR00670">
    <property type="entry name" value="asp_carb_tr"/>
    <property type="match status" value="1"/>
</dbReference>
<dbReference type="NCBIfam" id="NF002032">
    <property type="entry name" value="PRK00856.1"/>
    <property type="match status" value="1"/>
</dbReference>
<dbReference type="PANTHER" id="PTHR45753:SF6">
    <property type="entry name" value="ASPARTATE CARBAMOYLTRANSFERASE"/>
    <property type="match status" value="1"/>
</dbReference>
<dbReference type="PANTHER" id="PTHR45753">
    <property type="entry name" value="ORNITHINE CARBAMOYLTRANSFERASE, MITOCHONDRIAL"/>
    <property type="match status" value="1"/>
</dbReference>
<dbReference type="Pfam" id="PF00185">
    <property type="entry name" value="OTCace"/>
    <property type="match status" value="1"/>
</dbReference>
<dbReference type="Pfam" id="PF02729">
    <property type="entry name" value="OTCace_N"/>
    <property type="match status" value="1"/>
</dbReference>
<dbReference type="PRINTS" id="PR00100">
    <property type="entry name" value="AOTCASE"/>
</dbReference>
<dbReference type="PRINTS" id="PR00101">
    <property type="entry name" value="ATCASE"/>
</dbReference>
<dbReference type="SUPFAM" id="SSF53671">
    <property type="entry name" value="Aspartate/ornithine carbamoyltransferase"/>
    <property type="match status" value="1"/>
</dbReference>
<dbReference type="PROSITE" id="PS00097">
    <property type="entry name" value="CARBAMOYLTRANSFERASE"/>
    <property type="match status" value="1"/>
</dbReference>
<gene>
    <name evidence="1" type="primary">pyrB</name>
    <name type="ordered locus">Cag_1334</name>
</gene>
<name>PYRB_CHLCH</name>
<sequence length="311" mass="33846">MKHLTGLCNCSAATIATLLELASDYKKELLKSNPQFQPTLCNKRIALVFFENSTRTRFSFELAARHLGASTLNFAAAASSVSKGETLSDTIKNLEAMQVDGFVLRHPSSGAANFITTITSRPVVNAGDGANEHPTQALLDLFTLQEHFGRLKGIRIIIIGDVLHSRVARSNIYGLLSVGAEVGLCSPVTLMPPDADQLGITMFTNLEDALAWADAAMVLRLQLERAAGGYLPSLEEYSVYYGLTDERLDRIQKNLLVLHPGPINREIEISNNVADRIQPPGYSKSMLLEQVTNGVAVRMAVLHTLLAENGK</sequence>
<accession>Q3AQY1</accession>